<proteinExistence type="inferred from homology"/>
<organism>
    <name type="scientific">Photorhabdus laumondii subsp. laumondii (strain DSM 15139 / CIP 105565 / TT01)</name>
    <name type="common">Photorhabdus luminescens subsp. laumondii</name>
    <dbReference type="NCBI Taxonomy" id="243265"/>
    <lineage>
        <taxon>Bacteria</taxon>
        <taxon>Pseudomonadati</taxon>
        <taxon>Pseudomonadota</taxon>
        <taxon>Gammaproteobacteria</taxon>
        <taxon>Enterobacterales</taxon>
        <taxon>Morganellaceae</taxon>
        <taxon>Photorhabdus</taxon>
    </lineage>
</organism>
<accession>Q7N6K4</accession>
<keyword id="KW-0479">Metal-binding</keyword>
<keyword id="KW-0520">NAD</keyword>
<keyword id="KW-0560">Oxidoreductase</keyword>
<keyword id="KW-1185">Reference proteome</keyword>
<feature type="chain" id="PRO_0000160220" description="NAD-dependent malic enzyme">
    <location>
        <begin position="1"/>
        <end position="565"/>
    </location>
</feature>
<feature type="active site" description="Proton donor" evidence="1">
    <location>
        <position position="104"/>
    </location>
</feature>
<feature type="active site" description="Proton acceptor" evidence="1">
    <location>
        <position position="175"/>
    </location>
</feature>
<feature type="binding site" evidence="1">
    <location>
        <position position="157"/>
    </location>
    <ligand>
        <name>NAD(+)</name>
        <dbReference type="ChEBI" id="CHEBI:57540"/>
    </ligand>
</feature>
<feature type="binding site" evidence="1">
    <location>
        <position position="246"/>
    </location>
    <ligand>
        <name>a divalent metal cation</name>
        <dbReference type="ChEBI" id="CHEBI:60240"/>
    </ligand>
</feature>
<feature type="binding site" evidence="1">
    <location>
        <position position="247"/>
    </location>
    <ligand>
        <name>a divalent metal cation</name>
        <dbReference type="ChEBI" id="CHEBI:60240"/>
    </ligand>
</feature>
<feature type="binding site" evidence="1">
    <location>
        <position position="270"/>
    </location>
    <ligand>
        <name>a divalent metal cation</name>
        <dbReference type="ChEBI" id="CHEBI:60240"/>
    </ligand>
</feature>
<feature type="binding site" evidence="1">
    <location>
        <position position="270"/>
    </location>
    <ligand>
        <name>NAD(+)</name>
        <dbReference type="ChEBI" id="CHEBI:57540"/>
    </ligand>
</feature>
<feature type="binding site" evidence="1">
    <location>
        <position position="418"/>
    </location>
    <ligand>
        <name>NAD(+)</name>
        <dbReference type="ChEBI" id="CHEBI:57540"/>
    </ligand>
</feature>
<feature type="site" description="Important for activity" evidence="1">
    <location>
        <position position="270"/>
    </location>
</feature>
<comment type="catalytic activity">
    <reaction evidence="1">
        <text>(S)-malate + NAD(+) = pyruvate + CO2 + NADH</text>
        <dbReference type="Rhea" id="RHEA:12653"/>
        <dbReference type="ChEBI" id="CHEBI:15361"/>
        <dbReference type="ChEBI" id="CHEBI:15589"/>
        <dbReference type="ChEBI" id="CHEBI:16526"/>
        <dbReference type="ChEBI" id="CHEBI:57540"/>
        <dbReference type="ChEBI" id="CHEBI:57945"/>
        <dbReference type="EC" id="1.1.1.38"/>
    </reaction>
</comment>
<comment type="catalytic activity">
    <reaction evidence="1">
        <text>oxaloacetate + H(+) = pyruvate + CO2</text>
        <dbReference type="Rhea" id="RHEA:15641"/>
        <dbReference type="ChEBI" id="CHEBI:15361"/>
        <dbReference type="ChEBI" id="CHEBI:15378"/>
        <dbReference type="ChEBI" id="CHEBI:16452"/>
        <dbReference type="ChEBI" id="CHEBI:16526"/>
        <dbReference type="EC" id="1.1.1.38"/>
    </reaction>
</comment>
<comment type="cofactor">
    <cofactor evidence="1">
        <name>Mg(2+)</name>
        <dbReference type="ChEBI" id="CHEBI:18420"/>
    </cofactor>
    <cofactor evidence="1">
        <name>Mn(2+)</name>
        <dbReference type="ChEBI" id="CHEBI:29035"/>
    </cofactor>
    <text evidence="1">Divalent metal cations. Prefers magnesium or manganese.</text>
</comment>
<comment type="subunit">
    <text evidence="1">Homotetramer.</text>
</comment>
<comment type="similarity">
    <text evidence="1">Belongs to the malic enzymes family.</text>
</comment>
<name>MAO1_PHOLL</name>
<dbReference type="EC" id="1.1.1.38" evidence="1"/>
<dbReference type="EMBL" id="BX571864">
    <property type="protein sequence ID" value="CAE13839.1"/>
    <property type="molecule type" value="Genomic_DNA"/>
</dbReference>
<dbReference type="RefSeq" id="WP_011145843.1">
    <property type="nucleotide sequence ID" value="NC_005126.1"/>
</dbReference>
<dbReference type="SMR" id="Q7N6K4"/>
<dbReference type="STRING" id="243265.plu1546"/>
<dbReference type="GeneID" id="48847834"/>
<dbReference type="KEGG" id="plu:plu1546"/>
<dbReference type="eggNOG" id="COG0281">
    <property type="taxonomic scope" value="Bacteria"/>
</dbReference>
<dbReference type="HOGENOM" id="CLU_011405_5_2_6"/>
<dbReference type="OrthoDB" id="3314528at2"/>
<dbReference type="Proteomes" id="UP000002514">
    <property type="component" value="Chromosome"/>
</dbReference>
<dbReference type="GO" id="GO:0005829">
    <property type="term" value="C:cytosol"/>
    <property type="evidence" value="ECO:0007669"/>
    <property type="project" value="TreeGrafter"/>
</dbReference>
<dbReference type="GO" id="GO:0004471">
    <property type="term" value="F:malate dehydrogenase (decarboxylating) (NAD+) activity"/>
    <property type="evidence" value="ECO:0007669"/>
    <property type="project" value="UniProtKB-UniRule"/>
</dbReference>
<dbReference type="GO" id="GO:0046872">
    <property type="term" value="F:metal ion binding"/>
    <property type="evidence" value="ECO:0007669"/>
    <property type="project" value="UniProtKB-KW"/>
</dbReference>
<dbReference type="GO" id="GO:0051287">
    <property type="term" value="F:NAD binding"/>
    <property type="evidence" value="ECO:0007669"/>
    <property type="project" value="InterPro"/>
</dbReference>
<dbReference type="GO" id="GO:0008948">
    <property type="term" value="F:oxaloacetate decarboxylase activity"/>
    <property type="evidence" value="ECO:0007669"/>
    <property type="project" value="UniProtKB-UniRule"/>
</dbReference>
<dbReference type="GO" id="GO:0006108">
    <property type="term" value="P:malate metabolic process"/>
    <property type="evidence" value="ECO:0007669"/>
    <property type="project" value="TreeGrafter"/>
</dbReference>
<dbReference type="CDD" id="cd05312">
    <property type="entry name" value="NAD_bind_1_malic_enz"/>
    <property type="match status" value="1"/>
</dbReference>
<dbReference type="FunFam" id="3.40.50.10380:FF:000001">
    <property type="entry name" value="NAD-dependent malic enzyme"/>
    <property type="match status" value="1"/>
</dbReference>
<dbReference type="FunFam" id="3.40.50.720:FF:000055">
    <property type="entry name" value="NAD-dependent malic enzyme"/>
    <property type="match status" value="1"/>
</dbReference>
<dbReference type="Gene3D" id="3.40.50.10380">
    <property type="entry name" value="Malic enzyme, N-terminal domain"/>
    <property type="match status" value="1"/>
</dbReference>
<dbReference type="Gene3D" id="3.40.50.720">
    <property type="entry name" value="NAD(P)-binding Rossmann-like Domain"/>
    <property type="match status" value="1"/>
</dbReference>
<dbReference type="HAMAP" id="MF_01619">
    <property type="entry name" value="NAD_malic_enz"/>
    <property type="match status" value="1"/>
</dbReference>
<dbReference type="InterPro" id="IPR046346">
    <property type="entry name" value="Aminoacid_DH-like_N_sf"/>
</dbReference>
<dbReference type="InterPro" id="IPR015884">
    <property type="entry name" value="Malic_enzyme_CS"/>
</dbReference>
<dbReference type="InterPro" id="IPR012301">
    <property type="entry name" value="Malic_N_dom"/>
</dbReference>
<dbReference type="InterPro" id="IPR037062">
    <property type="entry name" value="Malic_N_dom_sf"/>
</dbReference>
<dbReference type="InterPro" id="IPR012302">
    <property type="entry name" value="Malic_NAD-bd"/>
</dbReference>
<dbReference type="InterPro" id="IPR001891">
    <property type="entry name" value="Malic_OxRdtase"/>
</dbReference>
<dbReference type="InterPro" id="IPR036291">
    <property type="entry name" value="NAD(P)-bd_dom_sf"/>
</dbReference>
<dbReference type="InterPro" id="IPR023667">
    <property type="entry name" value="NAD_malic_enz_proteobac"/>
</dbReference>
<dbReference type="NCBIfam" id="NF010052">
    <property type="entry name" value="PRK13529.1"/>
    <property type="match status" value="1"/>
</dbReference>
<dbReference type="PANTHER" id="PTHR23406">
    <property type="entry name" value="MALIC ENZYME-RELATED"/>
    <property type="match status" value="1"/>
</dbReference>
<dbReference type="PANTHER" id="PTHR23406:SF34">
    <property type="entry name" value="NAD-DEPENDENT MALIC ENZYME, MITOCHONDRIAL"/>
    <property type="match status" value="1"/>
</dbReference>
<dbReference type="Pfam" id="PF00390">
    <property type="entry name" value="malic"/>
    <property type="match status" value="1"/>
</dbReference>
<dbReference type="Pfam" id="PF03949">
    <property type="entry name" value="Malic_M"/>
    <property type="match status" value="1"/>
</dbReference>
<dbReference type="PIRSF" id="PIRSF000106">
    <property type="entry name" value="ME"/>
    <property type="match status" value="1"/>
</dbReference>
<dbReference type="PRINTS" id="PR00072">
    <property type="entry name" value="MALOXRDTASE"/>
</dbReference>
<dbReference type="SMART" id="SM01274">
    <property type="entry name" value="malic"/>
    <property type="match status" value="1"/>
</dbReference>
<dbReference type="SMART" id="SM00919">
    <property type="entry name" value="Malic_M"/>
    <property type="match status" value="1"/>
</dbReference>
<dbReference type="SUPFAM" id="SSF53223">
    <property type="entry name" value="Aminoacid dehydrogenase-like, N-terminal domain"/>
    <property type="match status" value="1"/>
</dbReference>
<dbReference type="SUPFAM" id="SSF51735">
    <property type="entry name" value="NAD(P)-binding Rossmann-fold domains"/>
    <property type="match status" value="1"/>
</dbReference>
<dbReference type="PROSITE" id="PS00331">
    <property type="entry name" value="MALIC_ENZYMES"/>
    <property type="match status" value="1"/>
</dbReference>
<protein>
    <recommendedName>
        <fullName evidence="1">NAD-dependent malic enzyme</fullName>
        <shortName evidence="1">NAD-ME</shortName>
        <ecNumber evidence="1">1.1.1.38</ecNumber>
    </recommendedName>
</protein>
<gene>
    <name evidence="1" type="primary">maeA</name>
    <name type="ordered locus">plu1546</name>
</gene>
<sequence>MELEHESKRPLYIPYSGPILLEFPLLNKGSAFTEEERRNFNLHGLLPEAVETIEEQAERAYRQYLDFKNDADKHIYLRNIQDTNETLFYRLLDAHLNEMMPIIYTPTVGEACEHFSDIYRRARGLFISHPNKAHIDDMLQNATKQNVKVIVVTDGERILGLGDQGIGGMGIPIGKLSLYTSCGGISPAYTLPVVLDVGTNNPQRLNDPLYMGWRHPRITGKEYDEFVDEFIQAVKRRWPNVLLQFEDFAQKNAMPLLNRYRHEICCFNDDIQGTAAVTLGSLIAASRAAGRQLKDQTVTFLGAGSAGCGIAEQIVAQMKSEGLSDEQARARIFMVDRFGLLTDKLPNLLDFQNKLVQKSSSLAKWDVNNDSISLLDVVRNAKPTVLIGVSGQAGLFTEEIIREMHKHCERPIVMPLSNPTSRVEARPEDIINWTDGAALVATGSPFNPVKYKDQEYPIAQCNNAYIFPGIGLGVIASGAKLVTDGMLMAASRTLANCSPLAQEGQGPLLPLIDDIQEVSRKIAKQVAKEAQIQGVATVTSDGALDEAIERNFWKPEYRVYKRTSF</sequence>
<reference key="1">
    <citation type="journal article" date="2003" name="Nat. Biotechnol.">
        <title>The genome sequence of the entomopathogenic bacterium Photorhabdus luminescens.</title>
        <authorList>
            <person name="Duchaud E."/>
            <person name="Rusniok C."/>
            <person name="Frangeul L."/>
            <person name="Buchrieser C."/>
            <person name="Givaudan A."/>
            <person name="Taourit S."/>
            <person name="Bocs S."/>
            <person name="Boursaux-Eude C."/>
            <person name="Chandler M."/>
            <person name="Charles J.-F."/>
            <person name="Dassa E."/>
            <person name="Derose R."/>
            <person name="Derzelle S."/>
            <person name="Freyssinet G."/>
            <person name="Gaudriault S."/>
            <person name="Medigue C."/>
            <person name="Lanois A."/>
            <person name="Powell K."/>
            <person name="Siguier P."/>
            <person name="Vincent R."/>
            <person name="Wingate V."/>
            <person name="Zouine M."/>
            <person name="Glaser P."/>
            <person name="Boemare N."/>
            <person name="Danchin A."/>
            <person name="Kunst F."/>
        </authorList>
    </citation>
    <scope>NUCLEOTIDE SEQUENCE [LARGE SCALE GENOMIC DNA]</scope>
    <source>
        <strain>DSM 15139 / CIP 105565 / TT01</strain>
    </source>
</reference>
<evidence type="ECO:0000255" key="1">
    <source>
        <dbReference type="HAMAP-Rule" id="MF_01619"/>
    </source>
</evidence>